<feature type="chain" id="PRO_0000116299" description="Protein U94">
    <location>
        <begin position="1"/>
        <end position="490"/>
    </location>
</feature>
<feature type="domain" description="PV NS1-Nuc" evidence="1">
    <location>
        <begin position="1"/>
        <end position="210"/>
    </location>
</feature>
<accession>Q00683</accession>
<protein>
    <recommendedName>
        <fullName>Protein U94</fullName>
    </recommendedName>
</protein>
<gene>
    <name type="primary">U94</name>
    <name type="synonym">HCLF2</name>
    <name type="synonym">REP</name>
</gene>
<organism>
    <name type="scientific">Human herpesvirus 6A (strain Uganda-1102)</name>
    <name type="common">HHV-6 variant A</name>
    <name type="synonym">Human B lymphotropic virus</name>
    <dbReference type="NCBI Taxonomy" id="10370"/>
    <lineage>
        <taxon>Viruses</taxon>
        <taxon>Duplodnaviria</taxon>
        <taxon>Heunggongvirae</taxon>
        <taxon>Peploviricota</taxon>
        <taxon>Herviviricetes</taxon>
        <taxon>Herpesvirales</taxon>
        <taxon>Orthoherpesviridae</taxon>
        <taxon>Betaherpesvirinae</taxon>
        <taxon>Roseolovirus</taxon>
        <taxon>Roseolovirus humanbeta6a</taxon>
        <taxon>Human betaherpesvirus 6A</taxon>
    </lineage>
</organism>
<evidence type="ECO:0000255" key="1">
    <source>
        <dbReference type="PROSITE-ProRule" id="PRU01366"/>
    </source>
</evidence>
<reference key="1">
    <citation type="journal article" date="1991" name="Nature">
        <title>Acquisition of the human adeno-associated virus type-2 rep gene by human herpesvirus type-6.</title>
        <authorList>
            <person name="Thomson B.J."/>
            <person name="Efstathiou S."/>
            <person name="Honess R.W."/>
        </authorList>
    </citation>
    <scope>NUCLEOTIDE SEQUENCE [GENOMIC DNA]</scope>
</reference>
<reference key="2">
    <citation type="journal article" date="1992" name="J. Gen. Virol.">
        <title>The right end of the unique region of the genome of human herpesvirus 6 U1102 contains a candidate immediate early gene enhancer and a homologue of the human cytomegalovirus US22 gene family.</title>
        <authorList>
            <person name="Thomson B.J."/>
            <person name="Honess R.W."/>
        </authorList>
    </citation>
    <scope>NUCLEOTIDE SEQUENCE [GENOMIC DNA]</scope>
</reference>
<reference key="3">
    <citation type="journal article" date="1995" name="Virology">
        <title>The DNA sequence of human herpesvirus-6: structure, coding content, and genome evolution.</title>
        <authorList>
            <person name="Gompels U.A."/>
            <person name="Nicholas J."/>
            <person name="Lawrence G.L."/>
            <person name="Jones M."/>
            <person name="Thomson B.J."/>
            <person name="Martin M.E.D."/>
            <person name="Efstathiou S."/>
            <person name="Craxton M.A."/>
            <person name="Macaulay H.A."/>
        </authorList>
    </citation>
    <scope>NUCLEOTIDE SEQUENCE [LARGE SCALE GENOMIC DNA]</scope>
</reference>
<organismHost>
    <name type="scientific">Homo sapiens</name>
    <name type="common">Human</name>
    <dbReference type="NCBI Taxonomy" id="9606"/>
</organismHost>
<name>VU94_HHV6U</name>
<sequence>MFSIINPSDDFWTKDKYIMLTIKGPMEWEAEIPGISTDFFCKFSNVSVPHFRDMHSPGAPDIKWITACTKMIDVILNYWNNKTAVPTPAKWYAQAENKAGRPSLILLIALDGIPSATIGKHTTEIRGVLIKDFFDGNAPKIDDWCTYAKTKKNGGGTQVFSLSYIPFALLQIIRPQFQWAWTNINELGDVCDEIHRKHIISHFNKKPNVKLMLFPKDGINGISLKSKFLGTIEWLSDLGIVTEDAWIRRDIRSYMQLLTLTHGDVLIHRALSIAKKRIRATRKAIDFIAHIDTDFQIYENPVYQLFCLQSFDPILAGTILYQWLSHRGGKKNTVSFIGPPGCGKSMLTGAILENIPLHGILHGSLNTKNLRAYGQVLVLWWKDISINFDNFNIIKSLLGGQKIIFPINENDHVQIGPCPIIATSCVDIRSMVHSNLHKINLSQRVYNFTFDKVIPRNFPVIQKDDINQFLFWARNRSINCFIDYTVPKIL</sequence>
<comment type="subcellular location">
    <subcellularLocation>
        <location evidence="1">Host nucleus</location>
    </subcellularLocation>
</comment>
<dbReference type="EMBL" id="X59532">
    <property type="protein sequence ID" value="CAA42112.1"/>
    <property type="molecule type" value="Genomic_DNA"/>
</dbReference>
<dbReference type="EMBL" id="D11134">
    <property type="protein sequence ID" value="BAA01906.1"/>
    <property type="molecule type" value="Genomic_DNA"/>
</dbReference>
<dbReference type="EMBL" id="X83413">
    <property type="protein sequence ID" value="CAA58343.1"/>
    <property type="molecule type" value="Genomic_DNA"/>
</dbReference>
<dbReference type="PIR" id="JQ1630">
    <property type="entry name" value="JQ1630"/>
</dbReference>
<dbReference type="RefSeq" id="NP_042987.1">
    <property type="nucleotide sequence ID" value="NC_001664.2"/>
</dbReference>
<dbReference type="SMR" id="Q00683"/>
<dbReference type="DNASU" id="1487970"/>
<dbReference type="GeneID" id="1487970"/>
<dbReference type="KEGG" id="vg:1487970"/>
<dbReference type="Proteomes" id="UP000009295">
    <property type="component" value="Segment"/>
</dbReference>
<dbReference type="GO" id="GO:0042025">
    <property type="term" value="C:host cell nucleus"/>
    <property type="evidence" value="ECO:0007669"/>
    <property type="project" value="UniProtKB-SubCell"/>
</dbReference>
<dbReference type="GO" id="GO:0003677">
    <property type="term" value="F:DNA binding"/>
    <property type="evidence" value="ECO:0007669"/>
    <property type="project" value="UniProtKB-KW"/>
</dbReference>
<dbReference type="GO" id="GO:0000166">
    <property type="term" value="F:nucleotide binding"/>
    <property type="evidence" value="ECO:0007669"/>
    <property type="project" value="UniProtKB-KW"/>
</dbReference>
<dbReference type="GO" id="GO:0006260">
    <property type="term" value="P:DNA replication"/>
    <property type="evidence" value="ECO:0007669"/>
    <property type="project" value="UniProtKB-KW"/>
</dbReference>
<dbReference type="GO" id="GO:0019079">
    <property type="term" value="P:viral genome replication"/>
    <property type="evidence" value="ECO:0007669"/>
    <property type="project" value="InterPro"/>
</dbReference>
<dbReference type="Gene3D" id="1.10.10.950">
    <property type="match status" value="1"/>
</dbReference>
<dbReference type="Gene3D" id="3.40.1310.20">
    <property type="match status" value="1"/>
</dbReference>
<dbReference type="Gene3D" id="3.40.50.300">
    <property type="entry name" value="P-loop containing nucleotide triphosphate hydrolases"/>
    <property type="match status" value="1"/>
</dbReference>
<dbReference type="InterPro" id="IPR014835">
    <property type="entry name" value="NS1-Nuc"/>
</dbReference>
<dbReference type="InterPro" id="IPR027417">
    <property type="entry name" value="P-loop_NTPase"/>
</dbReference>
<dbReference type="InterPro" id="IPR001257">
    <property type="entry name" value="Parvovirus_NS1_helicase"/>
</dbReference>
<dbReference type="InterPro" id="IPR049901">
    <property type="entry name" value="PV_NS1-NUC"/>
</dbReference>
<dbReference type="Pfam" id="PF01057">
    <property type="entry name" value="Parvo_NS1"/>
    <property type="match status" value="1"/>
</dbReference>
<dbReference type="Pfam" id="PF08724">
    <property type="entry name" value="Rep_N"/>
    <property type="match status" value="1"/>
</dbReference>
<dbReference type="SUPFAM" id="SSF55464">
    <property type="entry name" value="Origin of replication-binding domain, RBD-like"/>
    <property type="match status" value="1"/>
</dbReference>
<dbReference type="SUPFAM" id="SSF52540">
    <property type="entry name" value="P-loop containing nucleoside triphosphate hydrolases"/>
    <property type="match status" value="1"/>
</dbReference>
<dbReference type="PROSITE" id="PS52022">
    <property type="entry name" value="PV_NS1_NUC"/>
    <property type="match status" value="1"/>
</dbReference>
<proteinExistence type="inferred from homology"/>
<keyword id="KW-0235">DNA replication</keyword>
<keyword id="KW-0238">DNA-binding</keyword>
<keyword id="KW-1048">Host nucleus</keyword>
<keyword id="KW-0547">Nucleotide-binding</keyword>
<keyword id="KW-1185">Reference proteome</keyword>